<protein>
    <recommendedName>
        <fullName evidence="2">DNA methyltransferase CcrM</fullName>
        <shortName>M.CcrM</shortName>
        <ecNumber>2.1.1.72</ecNumber>
    </recommendedName>
    <alternativeName>
        <fullName>Adenine-specific methyltransferase BabI</fullName>
    </alternativeName>
    <alternativeName>
        <fullName evidence="4">Type II methyltransferase M.Bsu23445ORF519P</fullName>
        <shortName evidence="4">M.Bsu23445ORF519P</shortName>
    </alternativeName>
</protein>
<gene>
    <name type="primary">ccrM</name>
    <name type="ordered locus">BSUIS_A0519</name>
</gene>
<comment type="function">
    <text evidence="1 2 4">A beta subtype methylase that recognizes the double-stranded sequence 5'-GANTC-3' and methylates A-2 on both strands (By similarity) (PubMed:12654995). CcrM-mediated methylation has important cellular functions. Contributes to the accurate cell-cycle control of DNA replication and cellular morphology (By similarity).</text>
</comment>
<comment type="catalytic activity">
    <reaction>
        <text>a 2'-deoxyadenosine in DNA + S-adenosyl-L-methionine = an N(6)-methyl-2'-deoxyadenosine in DNA + S-adenosyl-L-homocysteine + H(+)</text>
        <dbReference type="Rhea" id="RHEA:15197"/>
        <dbReference type="Rhea" id="RHEA-COMP:12418"/>
        <dbReference type="Rhea" id="RHEA-COMP:12419"/>
        <dbReference type="ChEBI" id="CHEBI:15378"/>
        <dbReference type="ChEBI" id="CHEBI:57856"/>
        <dbReference type="ChEBI" id="CHEBI:59789"/>
        <dbReference type="ChEBI" id="CHEBI:90615"/>
        <dbReference type="ChEBI" id="CHEBI:90616"/>
        <dbReference type="EC" id="2.1.1.72"/>
    </reaction>
</comment>
<comment type="similarity">
    <text evidence="5">Belongs to the N(4)/N(6)-methyltransferase family.</text>
</comment>
<keyword id="KW-0235">DNA replication</keyword>
<keyword id="KW-0238">DNA-binding</keyword>
<keyword id="KW-0489">Methyltransferase</keyword>
<keyword id="KW-0949">S-adenosyl-L-methionine</keyword>
<keyword id="KW-0808">Transferase</keyword>
<proteinExistence type="inferred from homology"/>
<name>CCRM_BRUSI</name>
<feature type="chain" id="PRO_0000363190" description="DNA methyltransferase CcrM">
    <location>
        <begin position="1"/>
        <end position="377"/>
    </location>
</feature>
<feature type="domain" description="RAMA" evidence="3">
    <location>
        <begin position="271"/>
        <end position="373"/>
    </location>
</feature>
<evidence type="ECO:0000250" key="1">
    <source>
        <dbReference type="UniProtKB" id="O30569"/>
    </source>
</evidence>
<evidence type="ECO:0000250" key="2">
    <source>
        <dbReference type="UniProtKB" id="Q2YMK2"/>
    </source>
</evidence>
<evidence type="ECO:0000255" key="3"/>
<evidence type="ECO:0000303" key="4">
    <source>
    </source>
</evidence>
<evidence type="ECO:0000305" key="5"/>
<sequence length="377" mass="42188">MSLVRLAHELPIEAPRTAWLDSIIKGDCVSALERLPDHSVDVIFADPPYNLQLGGDLHRPDQSMVSAVDDHWDQFESFQAYDAFTRAWLLACRRVLKPNGTIWVIGSYHNIFRVGTQLQDLGFWLLNDIVWRKTNPMPNFRGRRFQNAHETLIWASRDQKGKGYTFNYEAMKAANDDVQMRSDWLFPICTGSERLKDENGDKVHPTQKPEALLARIMMASSKPGDVILDPFFGSGTTGAVAKRLGRHFVGIEREQPYIDAATARINAVEPLGKAELTVMTGKRAEPRVAFTSVMEAGLLRPGTVLCDERRRFAAIVRADGTLTANGEAGSIHRIGARVQGFDACNGWTFWHFEENGVLKPIDALRKIIREQMAAAGA</sequence>
<accession>B0CKH7</accession>
<organism>
    <name type="scientific">Brucella suis (strain ATCC 23445 / NCTC 10510)</name>
    <dbReference type="NCBI Taxonomy" id="470137"/>
    <lineage>
        <taxon>Bacteria</taxon>
        <taxon>Pseudomonadati</taxon>
        <taxon>Pseudomonadota</taxon>
        <taxon>Alphaproteobacteria</taxon>
        <taxon>Hyphomicrobiales</taxon>
        <taxon>Brucellaceae</taxon>
        <taxon>Brucella/Ochrobactrum group</taxon>
        <taxon>Brucella</taxon>
    </lineage>
</organism>
<dbReference type="EC" id="2.1.1.72"/>
<dbReference type="EMBL" id="CP000911">
    <property type="protein sequence ID" value="ABY37607.1"/>
    <property type="molecule type" value="Genomic_DNA"/>
</dbReference>
<dbReference type="RefSeq" id="WP_004689516.1">
    <property type="nucleotide sequence ID" value="NC_010169.1"/>
</dbReference>
<dbReference type="SMR" id="B0CKH7"/>
<dbReference type="REBASE" id="16913">
    <property type="entry name" value="M.Bsu23445ORF519P"/>
</dbReference>
<dbReference type="KEGG" id="bmt:BSUIS_A0519"/>
<dbReference type="HOGENOM" id="CLU_024927_5_1_5"/>
<dbReference type="Proteomes" id="UP000008545">
    <property type="component" value="Chromosome I"/>
</dbReference>
<dbReference type="GO" id="GO:0005737">
    <property type="term" value="C:cytoplasm"/>
    <property type="evidence" value="ECO:0007669"/>
    <property type="project" value="TreeGrafter"/>
</dbReference>
<dbReference type="GO" id="GO:0003677">
    <property type="term" value="F:DNA binding"/>
    <property type="evidence" value="ECO:0007669"/>
    <property type="project" value="UniProtKB-KW"/>
</dbReference>
<dbReference type="GO" id="GO:0008170">
    <property type="term" value="F:N-methyltransferase activity"/>
    <property type="evidence" value="ECO:0007669"/>
    <property type="project" value="InterPro"/>
</dbReference>
<dbReference type="GO" id="GO:0009007">
    <property type="term" value="F:site-specific DNA-methyltransferase (adenine-specific) activity"/>
    <property type="evidence" value="ECO:0007669"/>
    <property type="project" value="UniProtKB-EC"/>
</dbReference>
<dbReference type="GO" id="GO:0006260">
    <property type="term" value="P:DNA replication"/>
    <property type="evidence" value="ECO:0007669"/>
    <property type="project" value="UniProtKB-KW"/>
</dbReference>
<dbReference type="GO" id="GO:0032259">
    <property type="term" value="P:methylation"/>
    <property type="evidence" value="ECO:0007669"/>
    <property type="project" value="UniProtKB-KW"/>
</dbReference>
<dbReference type="FunFam" id="3.40.50.150:FF:000276">
    <property type="entry name" value="Methyltransferase"/>
    <property type="match status" value="1"/>
</dbReference>
<dbReference type="Gene3D" id="3.40.50.150">
    <property type="entry name" value="Vaccinia Virus protein VP39"/>
    <property type="match status" value="1"/>
</dbReference>
<dbReference type="InterPro" id="IPR002941">
    <property type="entry name" value="DNA_methylase_N4/N6"/>
</dbReference>
<dbReference type="InterPro" id="IPR002052">
    <property type="entry name" value="DNA_methylase_N6_adenine_CS"/>
</dbReference>
<dbReference type="InterPro" id="IPR040843">
    <property type="entry name" value="RAMA"/>
</dbReference>
<dbReference type="InterPro" id="IPR001091">
    <property type="entry name" value="RM_Methyltransferase"/>
</dbReference>
<dbReference type="InterPro" id="IPR029063">
    <property type="entry name" value="SAM-dependent_MTases_sf"/>
</dbReference>
<dbReference type="PANTHER" id="PTHR13370">
    <property type="entry name" value="RNA METHYLASE-RELATED"/>
    <property type="match status" value="1"/>
</dbReference>
<dbReference type="PANTHER" id="PTHR13370:SF3">
    <property type="entry name" value="TRNA (GUANINE(10)-N2)-METHYLTRANSFERASE HOMOLOG"/>
    <property type="match status" value="1"/>
</dbReference>
<dbReference type="Pfam" id="PF01555">
    <property type="entry name" value="N6_N4_Mtase"/>
    <property type="match status" value="1"/>
</dbReference>
<dbReference type="Pfam" id="PF18755">
    <property type="entry name" value="RAMA"/>
    <property type="match status" value="1"/>
</dbReference>
<dbReference type="PRINTS" id="PR00508">
    <property type="entry name" value="S21N4MTFRASE"/>
</dbReference>
<dbReference type="SUPFAM" id="SSF53335">
    <property type="entry name" value="S-adenosyl-L-methionine-dependent methyltransferases"/>
    <property type="match status" value="1"/>
</dbReference>
<dbReference type="PROSITE" id="PS00092">
    <property type="entry name" value="N6_MTASE"/>
    <property type="match status" value="1"/>
</dbReference>
<reference key="1">
    <citation type="submission" date="2007-12" db="EMBL/GenBank/DDBJ databases">
        <title>Brucella suis ATCC 23445 whole genome shotgun sequencing project.</title>
        <authorList>
            <person name="Setubal J.C."/>
            <person name="Bowns C."/>
            <person name="Boyle S."/>
            <person name="Crasta O.R."/>
            <person name="Czar M.J."/>
            <person name="Dharmanolla C."/>
            <person name="Gillespie J.J."/>
            <person name="Kenyon R.W."/>
            <person name="Lu J."/>
            <person name="Mane S."/>
            <person name="Mohapatra S."/>
            <person name="Nagrani S."/>
            <person name="Purkayastha A."/>
            <person name="Rajasimha H.K."/>
            <person name="Shallom J.M."/>
            <person name="Shallom S."/>
            <person name="Shukla M."/>
            <person name="Snyder E.E."/>
            <person name="Sobral B.W."/>
            <person name="Wattam A.R."/>
            <person name="Will R."/>
            <person name="Williams K."/>
            <person name="Yoo H."/>
            <person name="Bruce D."/>
            <person name="Detter C."/>
            <person name="Munk C."/>
            <person name="Brettin T.S."/>
        </authorList>
    </citation>
    <scope>NUCLEOTIDE SEQUENCE [LARGE SCALE GENOMIC DNA]</scope>
    <source>
        <strain>ATCC 23445 / NCTC 10510</strain>
    </source>
</reference>
<reference key="2">
    <citation type="journal article" date="2003" name="Nucleic Acids Res.">
        <title>A nomenclature for restriction enzymes, DNA methyltransferases, homing endonucleases and their genes.</title>
        <authorList>
            <person name="Roberts R.J."/>
            <person name="Belfort M."/>
            <person name="Bestor T."/>
            <person name="Bhagwat A.S."/>
            <person name="Bickle T.A."/>
            <person name="Bitinaite J."/>
            <person name="Blumenthal R.M."/>
            <person name="Degtyarev S.K."/>
            <person name="Dryden D.T."/>
            <person name="Dybvig K."/>
            <person name="Firman K."/>
            <person name="Gromova E.S."/>
            <person name="Gumport R.I."/>
            <person name="Halford S.E."/>
            <person name="Hattman S."/>
            <person name="Heitman J."/>
            <person name="Hornby D.P."/>
            <person name="Janulaitis A."/>
            <person name="Jeltsch A."/>
            <person name="Josephsen J."/>
            <person name="Kiss A."/>
            <person name="Klaenhammer T.R."/>
            <person name="Kobayashi I."/>
            <person name="Kong H."/>
            <person name="Krueger D.H."/>
            <person name="Lacks S."/>
            <person name="Marinus M.G."/>
            <person name="Miyahara M."/>
            <person name="Morgan R.D."/>
            <person name="Murray N.E."/>
            <person name="Nagaraja V."/>
            <person name="Piekarowicz A."/>
            <person name="Pingoud A."/>
            <person name="Raleigh E."/>
            <person name="Rao D.N."/>
            <person name="Reich N."/>
            <person name="Repin V.E."/>
            <person name="Selker E.U."/>
            <person name="Shaw P.C."/>
            <person name="Stein D.C."/>
            <person name="Stoddard B.L."/>
            <person name="Szybalski W."/>
            <person name="Trautner T.A."/>
            <person name="Van Etten J.L."/>
            <person name="Vitor J.M."/>
            <person name="Wilson G.G."/>
            <person name="Xu S.Y."/>
        </authorList>
    </citation>
    <scope>NOMENCLATURE</scope>
    <scope>SUBTYPE</scope>
</reference>